<keyword id="KW-1185">Reference proteome</keyword>
<evidence type="ECO:0000256" key="1">
    <source>
        <dbReference type="SAM" id="MobiDB-lite"/>
    </source>
</evidence>
<evidence type="ECO:0000305" key="2"/>
<sequence>MRTRSKKTKTVNNNNDLQKSEEKQKFDQLPLDLEIEMFRRLPLKSVARFLTLSKSCATTIRSPSFITSFPSQPCTLIASAATIRTCHNLPSSFKSKDQRLYFFSSSSSSSTVFSTRLTCPLSPYDNLIEYYYHYASGLISIGCNRKQIVTNPSTGRFITLPSVRRRRVVVKSFFGYDPVSDQYKVSCMTERRHGLRQDPSSEHQVFTLGEKKPWKMIDCTSIPDHRPWSNGVCIDGFVYYVAKTGQGMSQLSLMRYALRADNLNLFTSLPEELRTLKLSGDTLLNYEGNVAWPLQLHLIFNVWVMDQDGEKHEWLKKITFNIEPWKSSSRYLDVRGTTHTGEFILAPSHYPDDEFYVFHYNLGKNSFTKKKLQVRIYNVRIVSTSSIIGLYLSFSLL</sequence>
<accession>Q9FZD5</accession>
<accession>F4IE81</accession>
<organism>
    <name type="scientific">Arabidopsis thaliana</name>
    <name type="common">Mouse-ear cress</name>
    <dbReference type="NCBI Taxonomy" id="3702"/>
    <lineage>
        <taxon>Eukaryota</taxon>
        <taxon>Viridiplantae</taxon>
        <taxon>Streptophyta</taxon>
        <taxon>Embryophyta</taxon>
        <taxon>Tracheophyta</taxon>
        <taxon>Spermatophyta</taxon>
        <taxon>Magnoliopsida</taxon>
        <taxon>eudicotyledons</taxon>
        <taxon>Gunneridae</taxon>
        <taxon>Pentapetalae</taxon>
        <taxon>rosids</taxon>
        <taxon>malvids</taxon>
        <taxon>Brassicales</taxon>
        <taxon>Brassicaceae</taxon>
        <taxon>Camelineae</taxon>
        <taxon>Arabidopsis</taxon>
    </lineage>
</organism>
<reference key="1">
    <citation type="journal article" date="2000" name="Nature">
        <title>Sequence and analysis of chromosome 1 of the plant Arabidopsis thaliana.</title>
        <authorList>
            <person name="Theologis A."/>
            <person name="Ecker J.R."/>
            <person name="Palm C.J."/>
            <person name="Federspiel N.A."/>
            <person name="Kaul S."/>
            <person name="White O."/>
            <person name="Alonso J."/>
            <person name="Altafi H."/>
            <person name="Araujo R."/>
            <person name="Bowman C.L."/>
            <person name="Brooks S.Y."/>
            <person name="Buehler E."/>
            <person name="Chan A."/>
            <person name="Chao Q."/>
            <person name="Chen H."/>
            <person name="Cheuk R.F."/>
            <person name="Chin C.W."/>
            <person name="Chung M.K."/>
            <person name="Conn L."/>
            <person name="Conway A.B."/>
            <person name="Conway A.R."/>
            <person name="Creasy T.H."/>
            <person name="Dewar K."/>
            <person name="Dunn P."/>
            <person name="Etgu P."/>
            <person name="Feldblyum T.V."/>
            <person name="Feng J.-D."/>
            <person name="Fong B."/>
            <person name="Fujii C.Y."/>
            <person name="Gill J.E."/>
            <person name="Goldsmith A.D."/>
            <person name="Haas B."/>
            <person name="Hansen N.F."/>
            <person name="Hughes B."/>
            <person name="Huizar L."/>
            <person name="Hunter J.L."/>
            <person name="Jenkins J."/>
            <person name="Johnson-Hopson C."/>
            <person name="Khan S."/>
            <person name="Khaykin E."/>
            <person name="Kim C.J."/>
            <person name="Koo H.L."/>
            <person name="Kremenetskaia I."/>
            <person name="Kurtz D.B."/>
            <person name="Kwan A."/>
            <person name="Lam B."/>
            <person name="Langin-Hooper S."/>
            <person name="Lee A."/>
            <person name="Lee J.M."/>
            <person name="Lenz C.A."/>
            <person name="Li J.H."/>
            <person name="Li Y.-P."/>
            <person name="Lin X."/>
            <person name="Liu S.X."/>
            <person name="Liu Z.A."/>
            <person name="Luros J.S."/>
            <person name="Maiti R."/>
            <person name="Marziali A."/>
            <person name="Militscher J."/>
            <person name="Miranda M."/>
            <person name="Nguyen M."/>
            <person name="Nierman W.C."/>
            <person name="Osborne B.I."/>
            <person name="Pai G."/>
            <person name="Peterson J."/>
            <person name="Pham P.K."/>
            <person name="Rizzo M."/>
            <person name="Rooney T."/>
            <person name="Rowley D."/>
            <person name="Sakano H."/>
            <person name="Salzberg S.L."/>
            <person name="Schwartz J.R."/>
            <person name="Shinn P."/>
            <person name="Southwick A.M."/>
            <person name="Sun H."/>
            <person name="Tallon L.J."/>
            <person name="Tambunga G."/>
            <person name="Toriumi M.J."/>
            <person name="Town C.D."/>
            <person name="Utterback T."/>
            <person name="Van Aken S."/>
            <person name="Vaysberg M."/>
            <person name="Vysotskaia V.S."/>
            <person name="Walker M."/>
            <person name="Wu D."/>
            <person name="Yu G."/>
            <person name="Fraser C.M."/>
            <person name="Venter J.C."/>
            <person name="Davis R.W."/>
        </authorList>
    </citation>
    <scope>NUCLEOTIDE SEQUENCE [LARGE SCALE GENOMIC DNA]</scope>
    <source>
        <strain>cv. Columbia</strain>
    </source>
</reference>
<reference key="2">
    <citation type="journal article" date="2017" name="Plant J.">
        <title>Araport11: a complete reannotation of the Arabidopsis thaliana reference genome.</title>
        <authorList>
            <person name="Cheng C.Y."/>
            <person name="Krishnakumar V."/>
            <person name="Chan A.P."/>
            <person name="Thibaud-Nissen F."/>
            <person name="Schobel S."/>
            <person name="Town C.D."/>
        </authorList>
    </citation>
    <scope>GENOME REANNOTATION</scope>
    <source>
        <strain>cv. Columbia</strain>
    </source>
</reference>
<name>FB307_ARATH</name>
<comment type="sequence caution" evidence="2">
    <conflict type="erroneous gene model prediction">
        <sequence resource="EMBL-CDS" id="AAF98568"/>
    </conflict>
</comment>
<gene>
    <name type="ordered locus">At1g26510</name>
    <name type="ORF">T1K7.13</name>
</gene>
<protein>
    <recommendedName>
        <fullName>Putative F-box protein At1g26510</fullName>
    </recommendedName>
</protein>
<feature type="chain" id="PRO_0000281930" description="Putative F-box protein At1g26510">
    <location>
        <begin position="1"/>
        <end position="397"/>
    </location>
</feature>
<feature type="domain" description="F-box">
    <location>
        <begin position="24"/>
        <end position="71"/>
    </location>
</feature>
<feature type="region of interest" description="Disordered" evidence="1">
    <location>
        <begin position="1"/>
        <end position="23"/>
    </location>
</feature>
<dbReference type="EMBL" id="AC013427">
    <property type="protein sequence ID" value="AAF98568.1"/>
    <property type="status" value="ALT_SEQ"/>
    <property type="molecule type" value="Genomic_DNA"/>
</dbReference>
<dbReference type="EMBL" id="CP002684">
    <property type="protein sequence ID" value="AEE30698.1"/>
    <property type="molecule type" value="Genomic_DNA"/>
</dbReference>
<dbReference type="PIR" id="H86391">
    <property type="entry name" value="H86391"/>
</dbReference>
<dbReference type="RefSeq" id="NP_173973.2">
    <property type="nucleotide sequence ID" value="NM_102413.2"/>
</dbReference>
<dbReference type="STRING" id="3702.Q9FZD5"/>
<dbReference type="PaxDb" id="3702-AT1G26510.1"/>
<dbReference type="EnsemblPlants" id="AT1G26510.1">
    <property type="protein sequence ID" value="AT1G26510.1"/>
    <property type="gene ID" value="AT1G26510"/>
</dbReference>
<dbReference type="GeneID" id="839191"/>
<dbReference type="Gramene" id="AT1G26510.1">
    <property type="protein sequence ID" value="AT1G26510.1"/>
    <property type="gene ID" value="AT1G26510"/>
</dbReference>
<dbReference type="KEGG" id="ath:AT1G26510"/>
<dbReference type="Araport" id="AT1G26510"/>
<dbReference type="TAIR" id="AT1G26510"/>
<dbReference type="HOGENOM" id="CLU_027176_8_0_1"/>
<dbReference type="InParanoid" id="Q9FZD5"/>
<dbReference type="PRO" id="PR:Q9FZD5"/>
<dbReference type="Proteomes" id="UP000006548">
    <property type="component" value="Chromosome 1"/>
</dbReference>
<dbReference type="ExpressionAtlas" id="Q9FZD5">
    <property type="expression patterns" value="baseline"/>
</dbReference>
<dbReference type="InterPro" id="IPR013187">
    <property type="entry name" value="F-box-assoc_dom_typ3"/>
</dbReference>
<dbReference type="InterPro" id="IPR017451">
    <property type="entry name" value="F-box-assoc_interact_dom"/>
</dbReference>
<dbReference type="InterPro" id="IPR036047">
    <property type="entry name" value="F-box-like_dom_sf"/>
</dbReference>
<dbReference type="NCBIfam" id="TIGR01640">
    <property type="entry name" value="F_box_assoc_1"/>
    <property type="match status" value="1"/>
</dbReference>
<dbReference type="PANTHER" id="PTHR31111">
    <property type="entry name" value="BNAA05G37150D PROTEIN-RELATED"/>
    <property type="match status" value="1"/>
</dbReference>
<dbReference type="PANTHER" id="PTHR31111:SF67">
    <property type="entry name" value="F-BOX DOMAIN-CONTAINING PROTEIN"/>
    <property type="match status" value="1"/>
</dbReference>
<dbReference type="Pfam" id="PF08268">
    <property type="entry name" value="FBA_3"/>
    <property type="match status" value="1"/>
</dbReference>
<dbReference type="SUPFAM" id="SSF81383">
    <property type="entry name" value="F-box domain"/>
    <property type="match status" value="1"/>
</dbReference>
<proteinExistence type="predicted"/>